<organism>
    <name type="scientific">Corynebacterium glutamicum (strain ATCC 13032 / DSM 20300 / JCM 1318 / BCRC 11384 / CCUG 27702 / LMG 3730 / NBRC 12168 / NCIMB 10025 / NRRL B-2784 / 534)</name>
    <dbReference type="NCBI Taxonomy" id="196627"/>
    <lineage>
        <taxon>Bacteria</taxon>
        <taxon>Bacillati</taxon>
        <taxon>Actinomycetota</taxon>
        <taxon>Actinomycetes</taxon>
        <taxon>Mycobacteriales</taxon>
        <taxon>Corynebacteriaceae</taxon>
        <taxon>Corynebacterium</taxon>
    </lineage>
</organism>
<feature type="chain" id="PRO_0000152370" description="Imidazole glycerol phosphate synthase subunit HisH">
    <location>
        <begin position="1"/>
        <end position="211"/>
    </location>
</feature>
<feature type="domain" description="Glutamine amidotransferase type-1">
    <location>
        <begin position="4"/>
        <end position="211"/>
    </location>
</feature>
<feature type="active site" description="Nucleophile" evidence="1">
    <location>
        <position position="82"/>
    </location>
</feature>
<feature type="active site" evidence="1">
    <location>
        <position position="192"/>
    </location>
</feature>
<feature type="active site" evidence="1">
    <location>
        <position position="194"/>
    </location>
</feature>
<feature type="sequence conflict" description="In Ref. 1; AAC15231." evidence="2" ref="1">
    <original>AQRALER</original>
    <variation>LRRTRAL</variation>
    <location>
        <begin position="18"/>
        <end position="24"/>
    </location>
</feature>
<feature type="sequence conflict" description="In Ref. 1; AAC15231." evidence="2" ref="1">
    <original>EV</original>
    <variation>SMF</variation>
    <location>
        <begin position="28"/>
        <end position="29"/>
    </location>
</feature>
<feature type="sequence conflict" description="In Ref. 1; AAC15231." evidence="2" ref="1">
    <original>DPEVCTNA</original>
    <variation>IQKLHPTH</variation>
    <location>
        <begin position="34"/>
        <end position="41"/>
    </location>
</feature>
<feature type="sequence conflict" description="In Ref. 1; AAC15231." evidence="2" ref="1">
    <original>GHRIIG</original>
    <variation>DIAYR</variation>
    <location>
        <begin position="64"/>
        <end position="69"/>
    </location>
</feature>
<feature type="sequence conflict" description="In Ref. 1; AAC15231." evidence="2" ref="1">
    <original>PEVVWA</original>
    <variation>QSCVG</variation>
    <location>
        <begin position="165"/>
        <end position="170"/>
    </location>
</feature>
<feature type="sequence conflict" description="In Ref. 1; AAC15231." evidence="2" ref="1">
    <original>NDR</original>
    <variation>VS</variation>
    <location>
        <begin position="174"/>
        <end position="176"/>
    </location>
</feature>
<feature type="sequence conflict" description="In Ref. 1." evidence="2" ref="1">
    <original>DAGAQLLRNWINYI</original>
    <variation>EQGXSYCETGSTTSNR</variation>
    <location>
        <begin position="198"/>
        <end position="211"/>
    </location>
</feature>
<accession>O69043</accession>
<name>HIS5_CORGL</name>
<gene>
    <name type="primary">hisH</name>
    <name type="ordered locus">Cgl2097</name>
    <name type="ordered locus">cg2300</name>
</gene>
<protein>
    <recommendedName>
        <fullName>Imidazole glycerol phosphate synthase subunit HisH</fullName>
        <ecNumber>4.3.2.10</ecNumber>
    </recommendedName>
    <alternativeName>
        <fullName>IGP synthase glutaminase subunit</fullName>
        <ecNumber>3.5.1.2</ecNumber>
    </alternativeName>
    <alternativeName>
        <fullName>IGP synthase subunit HisH</fullName>
    </alternativeName>
    <alternativeName>
        <fullName>ImGP synthase subunit HisH</fullName>
        <shortName>IGPS subunit HisH</shortName>
    </alternativeName>
</protein>
<sequence length="211" mass="23173">MTKTVALLDYGSGNLRSAQRALERAGAEVIVSSDPEVCTNADGLLVPGVGAFDACMKGLKNVFGHRIIGQRLAGGRPVMGICVGMQILFDEGDEHGIKSAGCGEWPGKVERLQAEILPHMGWNTLEMPTNSPMFEGISPDERFYFVHSYGVRKWTLETDDLTTPPEVVWAKHENDRFVAAVENGTLWATQFHPEKSGDAGAQLLRNWINYI</sequence>
<evidence type="ECO:0000250" key="1"/>
<evidence type="ECO:0000305" key="2"/>
<comment type="function">
    <text evidence="1">IGPS catalyzes the conversion of PRFAR and glutamine to IGP, AICAR and glutamate. The HisH subunit catalyzes the hydrolysis of glutamine to glutamate and ammonia as part of the synthesis of IGP and AICAR. The resulting ammonia molecule is channeled to the active site of HisF (By similarity).</text>
</comment>
<comment type="catalytic activity">
    <reaction>
        <text>5-[(5-phospho-1-deoxy-D-ribulos-1-ylimino)methylamino]-1-(5-phospho-beta-D-ribosyl)imidazole-4-carboxamide + L-glutamine = D-erythro-1-(imidazol-4-yl)glycerol 3-phosphate + 5-amino-1-(5-phospho-beta-D-ribosyl)imidazole-4-carboxamide + L-glutamate + H(+)</text>
        <dbReference type="Rhea" id="RHEA:24793"/>
        <dbReference type="ChEBI" id="CHEBI:15378"/>
        <dbReference type="ChEBI" id="CHEBI:29985"/>
        <dbReference type="ChEBI" id="CHEBI:58278"/>
        <dbReference type="ChEBI" id="CHEBI:58359"/>
        <dbReference type="ChEBI" id="CHEBI:58475"/>
        <dbReference type="ChEBI" id="CHEBI:58525"/>
        <dbReference type="EC" id="4.3.2.10"/>
    </reaction>
</comment>
<comment type="catalytic activity">
    <reaction>
        <text>L-glutamine + H2O = L-glutamate + NH4(+)</text>
        <dbReference type="Rhea" id="RHEA:15889"/>
        <dbReference type="ChEBI" id="CHEBI:15377"/>
        <dbReference type="ChEBI" id="CHEBI:28938"/>
        <dbReference type="ChEBI" id="CHEBI:29985"/>
        <dbReference type="ChEBI" id="CHEBI:58359"/>
        <dbReference type="EC" id="3.5.1.2"/>
    </reaction>
</comment>
<comment type="pathway">
    <text>Amino-acid biosynthesis; L-histidine biosynthesis; L-histidine from 5-phospho-alpha-D-ribose 1-diphosphate: step 5/9.</text>
</comment>
<comment type="subunit">
    <text evidence="1">Heterodimer of HisH and HisF.</text>
</comment>
<comment type="subcellular location">
    <subcellularLocation>
        <location evidence="1">Cytoplasm</location>
    </subcellularLocation>
</comment>
<keyword id="KW-0028">Amino-acid biosynthesis</keyword>
<keyword id="KW-0963">Cytoplasm</keyword>
<keyword id="KW-0315">Glutamine amidotransferase</keyword>
<keyword id="KW-0368">Histidine biosynthesis</keyword>
<keyword id="KW-0378">Hydrolase</keyword>
<keyword id="KW-0456">Lyase</keyword>
<keyword id="KW-1185">Reference proteome</keyword>
<proteinExistence type="inferred from homology"/>
<reference key="1">
    <citation type="submission" date="1998-04" db="EMBL/GenBank/DDBJ databases">
        <authorList>
            <person name="Jung S.I."/>
            <person name="Han M.S."/>
            <person name="Park Y.J."/>
            <person name="Lee S.K."/>
            <person name="Lee M.-S."/>
        </authorList>
    </citation>
    <scope>NUCLEOTIDE SEQUENCE [GENOMIC DNA]</scope>
    <source>
        <strain>ATCC 13059 / LMG 3658 / NCIB 10332 / AS019 / 613</strain>
    </source>
</reference>
<reference key="2">
    <citation type="journal article" date="2003" name="Appl. Microbiol. Biotechnol.">
        <title>The Corynebacterium glutamicum genome: features and impacts on biotechnological processes.</title>
        <authorList>
            <person name="Ikeda M."/>
            <person name="Nakagawa S."/>
        </authorList>
    </citation>
    <scope>NUCLEOTIDE SEQUENCE [LARGE SCALE GENOMIC DNA]</scope>
    <source>
        <strain>ATCC 13032 / DSM 20300 / JCM 1318 / BCRC 11384 / CCUG 27702 / LMG 3730 / NBRC 12168 / NCIMB 10025 / NRRL B-2784 / 534</strain>
    </source>
</reference>
<reference key="3">
    <citation type="journal article" date="2003" name="J. Biotechnol.">
        <title>The complete Corynebacterium glutamicum ATCC 13032 genome sequence and its impact on the production of L-aspartate-derived amino acids and vitamins.</title>
        <authorList>
            <person name="Kalinowski J."/>
            <person name="Bathe B."/>
            <person name="Bartels D."/>
            <person name="Bischoff N."/>
            <person name="Bott M."/>
            <person name="Burkovski A."/>
            <person name="Dusch N."/>
            <person name="Eggeling L."/>
            <person name="Eikmanns B.J."/>
            <person name="Gaigalat L."/>
            <person name="Goesmann A."/>
            <person name="Hartmann M."/>
            <person name="Huthmacher K."/>
            <person name="Kraemer R."/>
            <person name="Linke B."/>
            <person name="McHardy A.C."/>
            <person name="Meyer F."/>
            <person name="Moeckel B."/>
            <person name="Pfefferle W."/>
            <person name="Puehler A."/>
            <person name="Rey D.A."/>
            <person name="Rueckert C."/>
            <person name="Rupp O."/>
            <person name="Sahm H."/>
            <person name="Wendisch V.F."/>
            <person name="Wiegraebe I."/>
            <person name="Tauch A."/>
        </authorList>
    </citation>
    <scope>NUCLEOTIDE SEQUENCE [LARGE SCALE GENOMIC DNA]</scope>
    <source>
        <strain>ATCC 13032 / DSM 20300 / JCM 1318 / BCRC 11384 / CCUG 27702 / LMG 3730 / NBRC 12168 / NCIMB 10025 / NRRL B-2784 / 534</strain>
    </source>
</reference>
<dbReference type="EC" id="4.3.2.10"/>
<dbReference type="EC" id="3.5.1.2"/>
<dbReference type="EMBL" id="AF060558">
    <property type="protein sequence ID" value="AAC15231.1"/>
    <property type="molecule type" value="Genomic_DNA"/>
</dbReference>
<dbReference type="EMBL" id="BA000036">
    <property type="protein sequence ID" value="BAB99490.1"/>
    <property type="molecule type" value="Genomic_DNA"/>
</dbReference>
<dbReference type="EMBL" id="BX927154">
    <property type="protein sequence ID" value="CAF20433.1"/>
    <property type="molecule type" value="Genomic_DNA"/>
</dbReference>
<dbReference type="RefSeq" id="NP_601296.1">
    <property type="nucleotide sequence ID" value="NC_003450.3"/>
</dbReference>
<dbReference type="RefSeq" id="WP_011014877.1">
    <property type="nucleotide sequence ID" value="NC_006958.1"/>
</dbReference>
<dbReference type="SMR" id="O69043"/>
<dbReference type="STRING" id="196627.cg2300"/>
<dbReference type="GeneID" id="1020048"/>
<dbReference type="KEGG" id="cgb:cg2300"/>
<dbReference type="KEGG" id="cgl:Cgl2097"/>
<dbReference type="PATRIC" id="fig|196627.13.peg.2033"/>
<dbReference type="eggNOG" id="COG0118">
    <property type="taxonomic scope" value="Bacteria"/>
</dbReference>
<dbReference type="HOGENOM" id="CLU_071837_1_0_11"/>
<dbReference type="OrthoDB" id="9807137at2"/>
<dbReference type="BioCyc" id="CORYNE:G18NG-11689-MONOMER"/>
<dbReference type="UniPathway" id="UPA00031">
    <property type="reaction ID" value="UER00010"/>
</dbReference>
<dbReference type="Proteomes" id="UP000000582">
    <property type="component" value="Chromosome"/>
</dbReference>
<dbReference type="Proteomes" id="UP000001009">
    <property type="component" value="Chromosome"/>
</dbReference>
<dbReference type="GO" id="GO:0005737">
    <property type="term" value="C:cytoplasm"/>
    <property type="evidence" value="ECO:0007669"/>
    <property type="project" value="UniProtKB-SubCell"/>
</dbReference>
<dbReference type="GO" id="GO:0004359">
    <property type="term" value="F:glutaminase activity"/>
    <property type="evidence" value="ECO:0007669"/>
    <property type="project" value="UniProtKB-EC"/>
</dbReference>
<dbReference type="GO" id="GO:0000107">
    <property type="term" value="F:imidazoleglycerol-phosphate synthase activity"/>
    <property type="evidence" value="ECO:0007669"/>
    <property type="project" value="UniProtKB-UniRule"/>
</dbReference>
<dbReference type="GO" id="GO:0016829">
    <property type="term" value="F:lyase activity"/>
    <property type="evidence" value="ECO:0007669"/>
    <property type="project" value="UniProtKB-KW"/>
</dbReference>
<dbReference type="GO" id="GO:0000105">
    <property type="term" value="P:L-histidine biosynthetic process"/>
    <property type="evidence" value="ECO:0007669"/>
    <property type="project" value="UniProtKB-UniRule"/>
</dbReference>
<dbReference type="CDD" id="cd01748">
    <property type="entry name" value="GATase1_IGP_Synthase"/>
    <property type="match status" value="1"/>
</dbReference>
<dbReference type="FunFam" id="3.40.50.880:FF:000056">
    <property type="entry name" value="Imidazole glycerol phosphate synthase subunit HisH"/>
    <property type="match status" value="1"/>
</dbReference>
<dbReference type="Gene3D" id="3.40.50.880">
    <property type="match status" value="1"/>
</dbReference>
<dbReference type="HAMAP" id="MF_00278">
    <property type="entry name" value="HisH"/>
    <property type="match status" value="1"/>
</dbReference>
<dbReference type="InterPro" id="IPR029062">
    <property type="entry name" value="Class_I_gatase-like"/>
</dbReference>
<dbReference type="InterPro" id="IPR017926">
    <property type="entry name" value="GATASE"/>
</dbReference>
<dbReference type="InterPro" id="IPR010139">
    <property type="entry name" value="Imidazole-glycPsynth_HisH"/>
</dbReference>
<dbReference type="NCBIfam" id="TIGR01855">
    <property type="entry name" value="IMP_synth_hisH"/>
    <property type="match status" value="1"/>
</dbReference>
<dbReference type="PANTHER" id="PTHR42701">
    <property type="entry name" value="IMIDAZOLE GLYCEROL PHOSPHATE SYNTHASE SUBUNIT HISH"/>
    <property type="match status" value="1"/>
</dbReference>
<dbReference type="PANTHER" id="PTHR42701:SF1">
    <property type="entry name" value="IMIDAZOLE GLYCEROL PHOSPHATE SYNTHASE SUBUNIT HISH"/>
    <property type="match status" value="1"/>
</dbReference>
<dbReference type="Pfam" id="PF00117">
    <property type="entry name" value="GATase"/>
    <property type="match status" value="1"/>
</dbReference>
<dbReference type="PIRSF" id="PIRSF000495">
    <property type="entry name" value="Amidotransf_hisH"/>
    <property type="match status" value="1"/>
</dbReference>
<dbReference type="SUPFAM" id="SSF52317">
    <property type="entry name" value="Class I glutamine amidotransferase-like"/>
    <property type="match status" value="1"/>
</dbReference>
<dbReference type="PROSITE" id="PS51273">
    <property type="entry name" value="GATASE_TYPE_1"/>
    <property type="match status" value="1"/>
</dbReference>